<comment type="function">
    <text evidence="1">Catalyzes the final step of fatty acid oxidation in which acetyl-CoA is released and the CoA ester of a fatty acid two carbons shorter is formed.</text>
</comment>
<comment type="catalytic activity">
    <reaction evidence="1">
        <text>an acyl-CoA + acetyl-CoA = a 3-oxoacyl-CoA + CoA</text>
        <dbReference type="Rhea" id="RHEA:21564"/>
        <dbReference type="ChEBI" id="CHEBI:57287"/>
        <dbReference type="ChEBI" id="CHEBI:57288"/>
        <dbReference type="ChEBI" id="CHEBI:58342"/>
        <dbReference type="ChEBI" id="CHEBI:90726"/>
        <dbReference type="EC" id="2.3.1.16"/>
    </reaction>
</comment>
<comment type="pathway">
    <text evidence="1">Lipid metabolism; fatty acid beta-oxidation.</text>
</comment>
<comment type="subunit">
    <text evidence="1">Heterotetramer of two alpha chains (FadJ) and two beta chains (FadI).</text>
</comment>
<comment type="subcellular location">
    <subcellularLocation>
        <location evidence="1">Cytoplasm</location>
    </subcellularLocation>
</comment>
<comment type="similarity">
    <text evidence="1">Belongs to the thiolase-like superfamily. Thiolase family.</text>
</comment>
<accession>A8GH87</accession>
<gene>
    <name evidence="1" type="primary">fadI</name>
    <name type="ordered locus">Spro_3379</name>
</gene>
<protein>
    <recommendedName>
        <fullName evidence="1">3-ketoacyl-CoA thiolase</fullName>
        <ecNumber evidence="1">2.3.1.16</ecNumber>
    </recommendedName>
    <alternativeName>
        <fullName evidence="1">ACSs</fullName>
    </alternativeName>
    <alternativeName>
        <fullName evidence="1">Acetyl-CoA acyltransferase</fullName>
    </alternativeName>
    <alternativeName>
        <fullName evidence="1">Acyl-CoA ligase</fullName>
    </alternativeName>
    <alternativeName>
        <fullName evidence="1">Beta-ketothiolase</fullName>
    </alternativeName>
    <alternativeName>
        <fullName evidence="1">Fatty acid oxidation complex subunit beta</fullName>
    </alternativeName>
</protein>
<dbReference type="EC" id="2.3.1.16" evidence="1"/>
<dbReference type="EMBL" id="CP000826">
    <property type="protein sequence ID" value="ABV42477.1"/>
    <property type="molecule type" value="Genomic_DNA"/>
</dbReference>
<dbReference type="SMR" id="A8GH87"/>
<dbReference type="STRING" id="399741.Spro_3379"/>
<dbReference type="KEGG" id="spe:Spro_3379"/>
<dbReference type="eggNOG" id="COG0183">
    <property type="taxonomic scope" value="Bacteria"/>
</dbReference>
<dbReference type="HOGENOM" id="CLU_031026_2_0_6"/>
<dbReference type="OrthoDB" id="8951704at2"/>
<dbReference type="UniPathway" id="UPA00659"/>
<dbReference type="GO" id="GO:0005829">
    <property type="term" value="C:cytosol"/>
    <property type="evidence" value="ECO:0007669"/>
    <property type="project" value="TreeGrafter"/>
</dbReference>
<dbReference type="GO" id="GO:0003988">
    <property type="term" value="F:acetyl-CoA C-acyltransferase activity"/>
    <property type="evidence" value="ECO:0007669"/>
    <property type="project" value="UniProtKB-UniRule"/>
</dbReference>
<dbReference type="GO" id="GO:0006635">
    <property type="term" value="P:fatty acid beta-oxidation"/>
    <property type="evidence" value="ECO:0007669"/>
    <property type="project" value="UniProtKB-UniRule"/>
</dbReference>
<dbReference type="CDD" id="cd00751">
    <property type="entry name" value="thiolase"/>
    <property type="match status" value="1"/>
</dbReference>
<dbReference type="FunFam" id="3.40.47.10:FF:000011">
    <property type="entry name" value="3-ketoacyl-CoA thiolase"/>
    <property type="match status" value="1"/>
</dbReference>
<dbReference type="Gene3D" id="3.40.47.10">
    <property type="match status" value="1"/>
</dbReference>
<dbReference type="HAMAP" id="MF_01618">
    <property type="entry name" value="FadI"/>
    <property type="match status" value="1"/>
</dbReference>
<dbReference type="InterPro" id="IPR012806">
    <property type="entry name" value="Ac-CoA_C-AcTrfase_FadI"/>
</dbReference>
<dbReference type="InterPro" id="IPR002155">
    <property type="entry name" value="Thiolase"/>
</dbReference>
<dbReference type="InterPro" id="IPR016039">
    <property type="entry name" value="Thiolase-like"/>
</dbReference>
<dbReference type="InterPro" id="IPR020615">
    <property type="entry name" value="Thiolase_acyl_enz_int_AS"/>
</dbReference>
<dbReference type="InterPro" id="IPR020610">
    <property type="entry name" value="Thiolase_AS"/>
</dbReference>
<dbReference type="InterPro" id="IPR020617">
    <property type="entry name" value="Thiolase_C"/>
</dbReference>
<dbReference type="InterPro" id="IPR020613">
    <property type="entry name" value="Thiolase_CS"/>
</dbReference>
<dbReference type="InterPro" id="IPR020616">
    <property type="entry name" value="Thiolase_N"/>
</dbReference>
<dbReference type="NCBIfam" id="TIGR01930">
    <property type="entry name" value="AcCoA-C-Actrans"/>
    <property type="match status" value="1"/>
</dbReference>
<dbReference type="NCBIfam" id="TIGR02446">
    <property type="entry name" value="FadI"/>
    <property type="match status" value="1"/>
</dbReference>
<dbReference type="NCBIfam" id="NF006516">
    <property type="entry name" value="PRK08963.1"/>
    <property type="match status" value="1"/>
</dbReference>
<dbReference type="PANTHER" id="PTHR18919:SF107">
    <property type="entry name" value="ACETYL-COA ACETYLTRANSFERASE, CYTOSOLIC"/>
    <property type="match status" value="1"/>
</dbReference>
<dbReference type="PANTHER" id="PTHR18919">
    <property type="entry name" value="ACETYL-COA C-ACYLTRANSFERASE"/>
    <property type="match status" value="1"/>
</dbReference>
<dbReference type="Pfam" id="PF02803">
    <property type="entry name" value="Thiolase_C"/>
    <property type="match status" value="1"/>
</dbReference>
<dbReference type="Pfam" id="PF00108">
    <property type="entry name" value="Thiolase_N"/>
    <property type="match status" value="1"/>
</dbReference>
<dbReference type="PIRSF" id="PIRSF000429">
    <property type="entry name" value="Ac-CoA_Ac_transf"/>
    <property type="match status" value="1"/>
</dbReference>
<dbReference type="SUPFAM" id="SSF53901">
    <property type="entry name" value="Thiolase-like"/>
    <property type="match status" value="2"/>
</dbReference>
<dbReference type="PROSITE" id="PS00098">
    <property type="entry name" value="THIOLASE_1"/>
    <property type="match status" value="1"/>
</dbReference>
<dbReference type="PROSITE" id="PS00737">
    <property type="entry name" value="THIOLASE_2"/>
    <property type="match status" value="1"/>
</dbReference>
<dbReference type="PROSITE" id="PS00099">
    <property type="entry name" value="THIOLASE_3"/>
    <property type="match status" value="1"/>
</dbReference>
<feature type="chain" id="PRO_1000069505" description="3-ketoacyl-CoA thiolase">
    <location>
        <begin position="1"/>
        <end position="436"/>
    </location>
</feature>
<feature type="active site" description="Acyl-thioester intermediate" evidence="1">
    <location>
        <position position="99"/>
    </location>
</feature>
<feature type="active site" description="Proton acceptor" evidence="1">
    <location>
        <position position="392"/>
    </location>
</feature>
<feature type="active site" description="Proton acceptor" evidence="1">
    <location>
        <position position="422"/>
    </location>
</feature>
<keyword id="KW-0012">Acyltransferase</keyword>
<keyword id="KW-0963">Cytoplasm</keyword>
<keyword id="KW-0276">Fatty acid metabolism</keyword>
<keyword id="KW-0442">Lipid degradation</keyword>
<keyword id="KW-0443">Lipid metabolism</keyword>
<keyword id="KW-0808">Transferase</keyword>
<evidence type="ECO:0000255" key="1">
    <source>
        <dbReference type="HAMAP-Rule" id="MF_01618"/>
    </source>
</evidence>
<sequence length="436" mass="46313">MSKALPLVTRHGDRIAIVNGLRTPFAKQATAYHGIPAVDLGKTAVSELLARTGIDPALIEQLVFGQVVQMPEAPNIAREIVLGTGMSVHTDAYSVSRACATSFQAIANVAESIMAGSISIGIAGGADSSSVLPIGVSKALARTLVDVNKARTLSQRLKLFSRLKFRDLMPVPPAVAEYSTGLRMGDTAEQMAKSHGITREEQDALAHRSHQLAAKAWEQGLLHDEVMTAYVPPYRTQISEDNNVRKDSSLASYAKLKPAFDRKHGSVTAANSTPLTDGAAAVLMMSESRAKELGLQPLGYLRSFAFSAIDVWEDMLLGPSYATPLALDRAGIGLADLTLIDMHEAFAAQTLANLKMFASDEFAQQKLGRSRAIGEVDMDKFNVLGGSIAYGHPFAATGARMITQTLHELKRRGGGLGLTTACAAGGLGAAMIVEVE</sequence>
<proteinExistence type="inferred from homology"/>
<organism>
    <name type="scientific">Serratia proteamaculans (strain 568)</name>
    <dbReference type="NCBI Taxonomy" id="399741"/>
    <lineage>
        <taxon>Bacteria</taxon>
        <taxon>Pseudomonadati</taxon>
        <taxon>Pseudomonadota</taxon>
        <taxon>Gammaproteobacteria</taxon>
        <taxon>Enterobacterales</taxon>
        <taxon>Yersiniaceae</taxon>
        <taxon>Serratia</taxon>
    </lineage>
</organism>
<reference key="1">
    <citation type="submission" date="2007-09" db="EMBL/GenBank/DDBJ databases">
        <title>Complete sequence of chromosome of Serratia proteamaculans 568.</title>
        <authorList>
            <consortium name="US DOE Joint Genome Institute"/>
            <person name="Copeland A."/>
            <person name="Lucas S."/>
            <person name="Lapidus A."/>
            <person name="Barry K."/>
            <person name="Glavina del Rio T."/>
            <person name="Dalin E."/>
            <person name="Tice H."/>
            <person name="Pitluck S."/>
            <person name="Chain P."/>
            <person name="Malfatti S."/>
            <person name="Shin M."/>
            <person name="Vergez L."/>
            <person name="Schmutz J."/>
            <person name="Larimer F."/>
            <person name="Land M."/>
            <person name="Hauser L."/>
            <person name="Kyrpides N."/>
            <person name="Kim E."/>
            <person name="Taghavi S."/>
            <person name="Newman L."/>
            <person name="Vangronsveld J."/>
            <person name="van der Lelie D."/>
            <person name="Richardson P."/>
        </authorList>
    </citation>
    <scope>NUCLEOTIDE SEQUENCE [LARGE SCALE GENOMIC DNA]</scope>
    <source>
        <strain>568</strain>
    </source>
</reference>
<name>FADI_SERP5</name>